<reference key="1">
    <citation type="journal article" date="2001" name="Nature">
        <title>Genome sequence of enterohaemorrhagic Escherichia coli O157:H7.</title>
        <authorList>
            <person name="Perna N.T."/>
            <person name="Plunkett G. III"/>
            <person name="Burland V."/>
            <person name="Mau B."/>
            <person name="Glasner J.D."/>
            <person name="Rose D.J."/>
            <person name="Mayhew G.F."/>
            <person name="Evans P.S."/>
            <person name="Gregor J."/>
            <person name="Kirkpatrick H.A."/>
            <person name="Posfai G."/>
            <person name="Hackett J."/>
            <person name="Klink S."/>
            <person name="Boutin A."/>
            <person name="Shao Y."/>
            <person name="Miller L."/>
            <person name="Grotbeck E.J."/>
            <person name="Davis N.W."/>
            <person name="Lim A."/>
            <person name="Dimalanta E.T."/>
            <person name="Potamousis K."/>
            <person name="Apodaca J."/>
            <person name="Anantharaman T.S."/>
            <person name="Lin J."/>
            <person name="Yen G."/>
            <person name="Schwartz D.C."/>
            <person name="Welch R.A."/>
            <person name="Blattner F.R."/>
        </authorList>
    </citation>
    <scope>NUCLEOTIDE SEQUENCE [LARGE SCALE GENOMIC DNA]</scope>
    <source>
        <strain>O157:H7 / EDL933 / ATCC 700927 / EHEC</strain>
    </source>
</reference>
<reference key="2">
    <citation type="journal article" date="2001" name="DNA Res.">
        <title>Complete genome sequence of enterohemorrhagic Escherichia coli O157:H7 and genomic comparison with a laboratory strain K-12.</title>
        <authorList>
            <person name="Hayashi T."/>
            <person name="Makino K."/>
            <person name="Ohnishi M."/>
            <person name="Kurokawa K."/>
            <person name="Ishii K."/>
            <person name="Yokoyama K."/>
            <person name="Han C.-G."/>
            <person name="Ohtsubo E."/>
            <person name="Nakayama K."/>
            <person name="Murata T."/>
            <person name="Tanaka M."/>
            <person name="Tobe T."/>
            <person name="Iida T."/>
            <person name="Takami H."/>
            <person name="Honda T."/>
            <person name="Sasakawa C."/>
            <person name="Ogasawara N."/>
            <person name="Yasunaga T."/>
            <person name="Kuhara S."/>
            <person name="Shiba T."/>
            <person name="Hattori M."/>
            <person name="Shinagawa H."/>
        </authorList>
    </citation>
    <scope>NUCLEOTIDE SEQUENCE [LARGE SCALE GENOMIC DNA]</scope>
    <source>
        <strain>O157:H7 / Sakai / RIMD 0509952 / EHEC</strain>
    </source>
</reference>
<keyword id="KW-1003">Cell membrane</keyword>
<keyword id="KW-0472">Membrane</keyword>
<keyword id="KW-1185">Reference proteome</keyword>
<keyword id="KW-0677">Repeat</keyword>
<keyword id="KW-0812">Transmembrane</keyword>
<keyword id="KW-1133">Transmembrane helix</keyword>
<keyword id="KW-0813">Transport</keyword>
<dbReference type="EMBL" id="AE005174">
    <property type="protein sequence ID" value="AAG58887.1"/>
    <property type="status" value="ALT_INIT"/>
    <property type="molecule type" value="Genomic_DNA"/>
</dbReference>
<dbReference type="EMBL" id="BA000007">
    <property type="protein sequence ID" value="BAB38048.1"/>
    <property type="status" value="ALT_INIT"/>
    <property type="molecule type" value="Genomic_DNA"/>
</dbReference>
<dbReference type="RefSeq" id="NP_312652.2">
    <property type="nucleotide sequence ID" value="NC_002695.1"/>
</dbReference>
<dbReference type="RefSeq" id="WP_001279752.1">
    <property type="nucleotide sequence ID" value="NZ_VOAI01000011.1"/>
</dbReference>
<dbReference type="SMR" id="P60873"/>
<dbReference type="STRING" id="155864.Z5181"/>
<dbReference type="GeneID" id="915412"/>
<dbReference type="KEGG" id="ece:Z5181"/>
<dbReference type="KEGG" id="ecs:ECs_4625"/>
<dbReference type="PATRIC" id="fig|386585.9.peg.4831"/>
<dbReference type="eggNOG" id="COG0569">
    <property type="taxonomic scope" value="Bacteria"/>
</dbReference>
<dbReference type="eggNOG" id="COG2985">
    <property type="taxonomic scope" value="Bacteria"/>
</dbReference>
<dbReference type="HOGENOM" id="CLU_035023_3_1_6"/>
<dbReference type="Proteomes" id="UP000000558">
    <property type="component" value="Chromosome"/>
</dbReference>
<dbReference type="Proteomes" id="UP000002519">
    <property type="component" value="Chromosome"/>
</dbReference>
<dbReference type="GO" id="GO:0005886">
    <property type="term" value="C:plasma membrane"/>
    <property type="evidence" value="ECO:0007669"/>
    <property type="project" value="UniProtKB-SubCell"/>
</dbReference>
<dbReference type="GO" id="GO:0008324">
    <property type="term" value="F:monoatomic cation transmembrane transporter activity"/>
    <property type="evidence" value="ECO:0007669"/>
    <property type="project" value="InterPro"/>
</dbReference>
<dbReference type="GO" id="GO:0006813">
    <property type="term" value="P:potassium ion transport"/>
    <property type="evidence" value="ECO:0007669"/>
    <property type="project" value="InterPro"/>
</dbReference>
<dbReference type="FunFam" id="3.30.70.1450:FF:000004">
    <property type="entry name" value="Putative transport protein YidE"/>
    <property type="match status" value="1"/>
</dbReference>
<dbReference type="Gene3D" id="3.30.70.1450">
    <property type="entry name" value="Regulator of K+ conductance, C-terminal domain"/>
    <property type="match status" value="2"/>
</dbReference>
<dbReference type="HAMAP" id="MF_01016">
    <property type="entry name" value="YidE"/>
    <property type="match status" value="1"/>
</dbReference>
<dbReference type="InterPro" id="IPR050144">
    <property type="entry name" value="AAE_transporter"/>
</dbReference>
<dbReference type="InterPro" id="IPR006037">
    <property type="entry name" value="RCK_C"/>
</dbReference>
<dbReference type="InterPro" id="IPR036721">
    <property type="entry name" value="RCK_C_sf"/>
</dbReference>
<dbReference type="InterPro" id="IPR023018">
    <property type="entry name" value="Transpt_YidE_put"/>
</dbReference>
<dbReference type="InterPro" id="IPR006512">
    <property type="entry name" value="YidE_YbjL"/>
</dbReference>
<dbReference type="NCBIfam" id="NF003007">
    <property type="entry name" value="PRK03818.1"/>
    <property type="match status" value="1"/>
</dbReference>
<dbReference type="NCBIfam" id="TIGR01625">
    <property type="entry name" value="YidE_YbjL_dupl"/>
    <property type="match status" value="2"/>
</dbReference>
<dbReference type="PANTHER" id="PTHR30445">
    <property type="entry name" value="K(+)_H(+) ANTIPORTER SUBUNIT KHTT"/>
    <property type="match status" value="1"/>
</dbReference>
<dbReference type="PANTHER" id="PTHR30445:SF3">
    <property type="entry name" value="TRANSPORT PROTEIN YIDE-RELATED"/>
    <property type="match status" value="1"/>
</dbReference>
<dbReference type="Pfam" id="PF06826">
    <property type="entry name" value="Asp-Al_Ex"/>
    <property type="match status" value="2"/>
</dbReference>
<dbReference type="Pfam" id="PF02080">
    <property type="entry name" value="TrkA_C"/>
    <property type="match status" value="2"/>
</dbReference>
<dbReference type="SUPFAM" id="SSF116726">
    <property type="entry name" value="TrkA C-terminal domain-like"/>
    <property type="match status" value="2"/>
</dbReference>
<dbReference type="PROSITE" id="PS51202">
    <property type="entry name" value="RCK_C"/>
    <property type="match status" value="2"/>
</dbReference>
<evidence type="ECO:0000255" key="1">
    <source>
        <dbReference type="HAMAP-Rule" id="MF_01016"/>
    </source>
</evidence>
<evidence type="ECO:0000305" key="2"/>
<comment type="subcellular location">
    <subcellularLocation>
        <location evidence="1">Cell membrane</location>
        <topology evidence="1">Multi-pass membrane protein</topology>
    </subcellularLocation>
</comment>
<comment type="similarity">
    <text evidence="1">Belongs to the AAE transporter (TC 2.A.81) family. YidE subfamily.</text>
</comment>
<comment type="sequence caution" evidence="2">
    <conflict type="erroneous initiation">
        <sequence resource="EMBL-CDS" id="AAG58887"/>
    </conflict>
</comment>
<comment type="sequence caution" evidence="2">
    <conflict type="erroneous initiation">
        <sequence resource="EMBL-CDS" id="BAB38048"/>
    </conflict>
</comment>
<proteinExistence type="inferred from homology"/>
<name>YIDE_ECO57</name>
<feature type="chain" id="PRO_0000208799" description="Putative transport protein YidE">
    <location>
        <begin position="1"/>
        <end position="553"/>
    </location>
</feature>
<feature type="transmembrane region" description="Helical" evidence="1">
    <location>
        <begin position="4"/>
        <end position="24"/>
    </location>
</feature>
<feature type="transmembrane region" description="Helical" evidence="1">
    <location>
        <begin position="28"/>
        <end position="48"/>
    </location>
</feature>
<feature type="transmembrane region" description="Helical" evidence="1">
    <location>
        <begin position="65"/>
        <end position="85"/>
    </location>
</feature>
<feature type="transmembrane region" description="Helical" evidence="1">
    <location>
        <begin position="95"/>
        <end position="115"/>
    </location>
</feature>
<feature type="transmembrane region" description="Helical" evidence="1">
    <location>
        <begin position="158"/>
        <end position="178"/>
    </location>
</feature>
<feature type="transmembrane region" description="Helical" evidence="1">
    <location>
        <begin position="371"/>
        <end position="391"/>
    </location>
</feature>
<feature type="transmembrane region" description="Helical" evidence="1">
    <location>
        <begin position="393"/>
        <end position="413"/>
    </location>
</feature>
<feature type="transmembrane region" description="Helical" evidence="1">
    <location>
        <begin position="439"/>
        <end position="459"/>
    </location>
</feature>
<feature type="transmembrane region" description="Helical" evidence="1">
    <location>
        <begin position="464"/>
        <end position="484"/>
    </location>
</feature>
<feature type="transmembrane region" description="Helical" evidence="1">
    <location>
        <begin position="493"/>
        <end position="513"/>
    </location>
</feature>
<feature type="transmembrane region" description="Helical" evidence="1">
    <location>
        <begin position="533"/>
        <end position="553"/>
    </location>
</feature>
<feature type="domain" description="RCK C-terminal 1" evidence="1">
    <location>
        <begin position="191"/>
        <end position="276"/>
    </location>
</feature>
<feature type="domain" description="RCK C-terminal 2" evidence="1">
    <location>
        <begin position="279"/>
        <end position="361"/>
    </location>
</feature>
<organism>
    <name type="scientific">Escherichia coli O157:H7</name>
    <dbReference type="NCBI Taxonomy" id="83334"/>
    <lineage>
        <taxon>Bacteria</taxon>
        <taxon>Pseudomonadati</taxon>
        <taxon>Pseudomonadota</taxon>
        <taxon>Gammaproteobacteria</taxon>
        <taxon>Enterobacterales</taxon>
        <taxon>Enterobacteriaceae</taxon>
        <taxon>Escherichia</taxon>
    </lineage>
</organism>
<protein>
    <recommendedName>
        <fullName evidence="1">Putative transport protein YidE</fullName>
    </recommendedName>
</protein>
<accession>P60873</accession>
<accession>P29211</accession>
<accession>P76732</accession>
<accession>Q8X537</accession>
<sequence length="553" mass="58939">MSDIALTVSILALVAVVGLFIGNVKFRGIGLGIGGVLFGGIIVGHFVSQAGMTLSSDMLHVIQEFGLILFVYTIGIQVGPGFFASLRVSGLRLNLFAVLIVIIGGLVTAILHKLFDIPLPVVLGIFSGAVTNTPALGAGQQILRDLGTPMEMVDQMGMSYAMAYPFGICGILFTMWMLRVIFRVNVETEAQQHESSRTNGGALIKTINIRVENPNLHDLAIKDVPILNGDKIICSRLKREETLKVPSPDTIIQLGDLLHLVGQPADLHNAQLVIGQEVDTSLSTKGTDLRVERVVVTNENVLGKRIRDLHFKERYDVVISRLNRAGVELVASGDISLQFGDILNLVGRPSAIDAVANVLGNAQQKLQQVQMLPVFIGIGLGVLLGSIPVFVPGFPAALKLGLAGGPLIMALILGRIGSIGKLYWFMPPSANLALRELGIVLFLSVVGLKSGGDFVNTLVNGEGLSWIGYGALITAVPLITVGILARMLAKMNYLTMCGMLAGSMTDPPALAFANNLHPTSGAAALSYATVYPLVMFLRIITPQLLAVLFWSIG</sequence>
<gene>
    <name evidence="1" type="primary">yidE</name>
    <name type="ordered locus">Z5181</name>
    <name type="ordered locus">ECs4625</name>
</gene>